<keyword id="KW-1185">Reference proteome</keyword>
<keyword id="KW-0732">Signal</keyword>
<accession>O29500</accession>
<name>Y758_ARCFU</name>
<reference key="1">
    <citation type="journal article" date="1997" name="Nature">
        <title>The complete genome sequence of the hyperthermophilic, sulphate-reducing archaeon Archaeoglobus fulgidus.</title>
        <authorList>
            <person name="Klenk H.-P."/>
            <person name="Clayton R.A."/>
            <person name="Tomb J.-F."/>
            <person name="White O."/>
            <person name="Nelson K.E."/>
            <person name="Ketchum K.A."/>
            <person name="Dodson R.J."/>
            <person name="Gwinn M.L."/>
            <person name="Hickey E.K."/>
            <person name="Peterson J.D."/>
            <person name="Richardson D.L."/>
            <person name="Kerlavage A.R."/>
            <person name="Graham D.E."/>
            <person name="Kyrpides N.C."/>
            <person name="Fleischmann R.D."/>
            <person name="Quackenbush J."/>
            <person name="Lee N.H."/>
            <person name="Sutton G.G."/>
            <person name="Gill S.R."/>
            <person name="Kirkness E.F."/>
            <person name="Dougherty B.A."/>
            <person name="McKenney K."/>
            <person name="Adams M.D."/>
            <person name="Loftus B.J."/>
            <person name="Peterson S.N."/>
            <person name="Reich C.I."/>
            <person name="McNeil L.K."/>
            <person name="Badger J.H."/>
            <person name="Glodek A."/>
            <person name="Zhou L."/>
            <person name="Overbeek R."/>
            <person name="Gocayne J.D."/>
            <person name="Weidman J.F."/>
            <person name="McDonald L.A."/>
            <person name="Utterback T.R."/>
            <person name="Cotton M.D."/>
            <person name="Spriggs T."/>
            <person name="Artiach P."/>
            <person name="Kaine B.P."/>
            <person name="Sykes S.M."/>
            <person name="Sadow P.W."/>
            <person name="D'Andrea K.P."/>
            <person name="Bowman C."/>
            <person name="Fujii C."/>
            <person name="Garland S.A."/>
            <person name="Mason T.M."/>
            <person name="Olsen G.J."/>
            <person name="Fraser C.M."/>
            <person name="Smith H.O."/>
            <person name="Woese C.R."/>
            <person name="Venter J.C."/>
        </authorList>
    </citation>
    <scope>NUCLEOTIDE SEQUENCE [LARGE SCALE GENOMIC DNA]</scope>
    <source>
        <strain>ATCC 49558 / DSM 4304 / JCM 9628 / NBRC 100126 / VC-16</strain>
    </source>
</reference>
<organism>
    <name type="scientific">Archaeoglobus fulgidus (strain ATCC 49558 / DSM 4304 / JCM 9628 / NBRC 100126 / VC-16)</name>
    <dbReference type="NCBI Taxonomy" id="224325"/>
    <lineage>
        <taxon>Archaea</taxon>
        <taxon>Methanobacteriati</taxon>
        <taxon>Methanobacteriota</taxon>
        <taxon>Archaeoglobi</taxon>
        <taxon>Archaeoglobales</taxon>
        <taxon>Archaeoglobaceae</taxon>
        <taxon>Archaeoglobus</taxon>
    </lineage>
</organism>
<gene>
    <name type="ordered locus">AF_0758</name>
</gene>
<sequence length="305" mass="34192">MSKAVSEILGYMYIFGIVMAVLAIVFVQVNTMTEDMKRSVMSQSLEQSFKKIQYIIHSVSFGEVPSQAVEIELQGGTLTLDKSDPEFIVAFVNYTETNPSNLPCGRVPNSVPLCINLSTGRLYTACTHTGYNFSACTLNHTIGKIVYRYKDWFLTLEAGSVFSKYSNQDYSKLLYEPRILYNATLSTPGKRFLVMTIPLLDGELSIGGSGRFRFVLNEGNSNVSLISVSNLGQDFNDAYVILRGTENKDAWCRFFERSGDVFNTTLDDTKTSYRRCSNSENAMASIKLSNVHEIIVIFRQVLFST</sequence>
<feature type="signal peptide" evidence="1">
    <location>
        <begin position="1"/>
        <end position="29"/>
    </location>
</feature>
<feature type="chain" id="PRO_0000013646" description="Uncharacterized protein AF_0758">
    <location>
        <begin position="30"/>
        <end position="305"/>
    </location>
</feature>
<proteinExistence type="inferred from homology"/>
<dbReference type="EMBL" id="AE000782">
    <property type="protein sequence ID" value="AAB90487.1"/>
    <property type="molecule type" value="Genomic_DNA"/>
</dbReference>
<dbReference type="PIR" id="F69344">
    <property type="entry name" value="F69344"/>
</dbReference>
<dbReference type="RefSeq" id="WP_010878261.1">
    <property type="nucleotide sequence ID" value="NC_000917.1"/>
</dbReference>
<dbReference type="STRING" id="224325.AF_0758"/>
<dbReference type="PaxDb" id="224325-AF_0758"/>
<dbReference type="EnsemblBacteria" id="AAB90487">
    <property type="protein sequence ID" value="AAB90487"/>
    <property type="gene ID" value="AF_0758"/>
</dbReference>
<dbReference type="GeneID" id="1483975"/>
<dbReference type="KEGG" id="afu:AF_0758"/>
<dbReference type="eggNOG" id="arCOG02911">
    <property type="taxonomic scope" value="Archaea"/>
</dbReference>
<dbReference type="HOGENOM" id="CLU_910894_0_0_2"/>
<dbReference type="Proteomes" id="UP000002199">
    <property type="component" value="Chromosome"/>
</dbReference>
<dbReference type="InterPro" id="IPR055713">
    <property type="entry name" value="DUF7289"/>
</dbReference>
<dbReference type="Pfam" id="PF23960">
    <property type="entry name" value="DUF7289"/>
    <property type="match status" value="1"/>
</dbReference>
<protein>
    <recommendedName>
        <fullName>Uncharacterized protein AF_0758</fullName>
    </recommendedName>
</protein>
<evidence type="ECO:0000255" key="1"/>